<feature type="signal peptide" evidence="2">
    <location>
        <begin position="1"/>
        <end position="21"/>
    </location>
</feature>
<feature type="propeptide" id="PRO_0000434825" evidence="4">
    <location>
        <begin position="22"/>
        <end position="50"/>
    </location>
</feature>
<feature type="chain" id="PRO_0000429212" description="U11-barytoxin-Tl1b">
    <location>
        <begin position="51"/>
        <end position="98"/>
    </location>
</feature>
<feature type="disulfide bond" evidence="1">
    <location>
        <begin position="57"/>
        <end position="71"/>
    </location>
</feature>
<feature type="disulfide bond" evidence="1">
    <location>
        <begin position="64"/>
        <end position="76"/>
    </location>
</feature>
<feature type="disulfide bond" evidence="1">
    <location>
        <begin position="70"/>
        <end position="89"/>
    </location>
</feature>
<name>ICK5_TRILK</name>
<protein>
    <recommendedName>
        <fullName>U11-barytoxin-Tl1b</fullName>
        <shortName>U11-BATX-Tl1b</shortName>
    </recommendedName>
    <alternativeName>
        <fullName evidence="3">Toxin ICK-5</fullName>
    </alternativeName>
</protein>
<reference key="1">
    <citation type="journal article" date="2013" name="Toxins">
        <title>A proteomics and transcriptomics investigation of the venom from the barychelid spider Trittame loki (brush-foot trapdoor).</title>
        <authorList>
            <person name="Undheim E.A."/>
            <person name="Sunagar K."/>
            <person name="Herzig V."/>
            <person name="Kely L."/>
            <person name="Low D.H."/>
            <person name="Jackson T.N."/>
            <person name="Jones A."/>
            <person name="Kurniawan N."/>
            <person name="King G.F."/>
            <person name="Ali S.A."/>
            <person name="Antunes A."/>
            <person name="Ruder T."/>
            <person name="Fry B.G."/>
        </authorList>
    </citation>
    <scope>NUCLEOTIDE SEQUENCE [MRNA]</scope>
    <source>
        <tissue>Venom gland</tissue>
    </source>
</reference>
<proteinExistence type="evidence at transcript level"/>
<keyword id="KW-1015">Disulfide bond</keyword>
<keyword id="KW-0872">Ion channel impairing toxin</keyword>
<keyword id="KW-0960">Knottin</keyword>
<keyword id="KW-0964">Secreted</keyword>
<keyword id="KW-0732">Signal</keyword>
<keyword id="KW-0800">Toxin</keyword>
<evidence type="ECO:0000250" key="1"/>
<evidence type="ECO:0000255" key="2"/>
<evidence type="ECO:0000303" key="3">
    <source>
    </source>
</evidence>
<evidence type="ECO:0000305" key="4"/>
<organism>
    <name type="scientific">Trittame loki</name>
    <name type="common">Brush-footed trapdoor spider</name>
    <dbReference type="NCBI Taxonomy" id="1295018"/>
    <lineage>
        <taxon>Eukaryota</taxon>
        <taxon>Metazoa</taxon>
        <taxon>Ecdysozoa</taxon>
        <taxon>Arthropoda</taxon>
        <taxon>Chelicerata</taxon>
        <taxon>Arachnida</taxon>
        <taxon>Araneae</taxon>
        <taxon>Mygalomorphae</taxon>
        <taxon>Barychelidae</taxon>
        <taxon>Trittame</taxon>
    </lineage>
</organism>
<accession>W4VS49</accession>
<comment type="function">
    <text evidence="4">Ion channel inhibitor.</text>
</comment>
<comment type="subcellular location">
    <subcellularLocation>
        <location evidence="1">Secreted</location>
    </subcellularLocation>
</comment>
<comment type="tissue specificity">
    <text>Expressed by the venom gland.</text>
</comment>
<comment type="domain">
    <text evidence="1">The presence of a 'disulfide through disulfide knot' structurally defines this protein as a knottin.</text>
</comment>
<comment type="similarity">
    <text evidence="4">Belongs to the neurotoxin 10 (Hwtx-1) family. 25 (ICK4) subfamily.</text>
</comment>
<dbReference type="EMBL" id="GAQE01000008">
    <property type="protein sequence ID" value="JAB84546.1"/>
    <property type="molecule type" value="Transcribed_RNA"/>
</dbReference>
<dbReference type="SMR" id="W4VS49"/>
<dbReference type="ArachnoServer" id="AS002041">
    <property type="toxin name" value="U11-barytoxin-Tl1b"/>
</dbReference>
<dbReference type="GO" id="GO:0005576">
    <property type="term" value="C:extracellular region"/>
    <property type="evidence" value="ECO:0007669"/>
    <property type="project" value="UniProtKB-SubCell"/>
</dbReference>
<dbReference type="GO" id="GO:0008200">
    <property type="term" value="F:ion channel inhibitor activity"/>
    <property type="evidence" value="ECO:0007669"/>
    <property type="project" value="InterPro"/>
</dbReference>
<dbReference type="GO" id="GO:0090729">
    <property type="term" value="F:toxin activity"/>
    <property type="evidence" value="ECO:0007669"/>
    <property type="project" value="UniProtKB-KW"/>
</dbReference>
<dbReference type="InterPro" id="IPR011696">
    <property type="entry name" value="Huwentoxin-1"/>
</dbReference>
<dbReference type="Pfam" id="PF07740">
    <property type="entry name" value="Toxin_12"/>
    <property type="match status" value="1"/>
</dbReference>
<dbReference type="SUPFAM" id="SSF57059">
    <property type="entry name" value="omega toxin-like"/>
    <property type="match status" value="1"/>
</dbReference>
<sequence>MKTLVLVAVLGLASLYLLSYASEVQQLSRDEEEFRALVASFGGLFDTEERGVDKEGCRKLFGGCVGDGDCCLHLGCKTRKLPPFADPYCAWDWTFGRK</sequence>